<accession>Q8RHX7</accession>
<comment type="function">
    <text evidence="1 4">Catalyzes the migration of the L-beta-lysine and D-lysine epsilon amino group to the delta carbon to produce 3,5-diaminohexanoate and 2,5-diaminohexanoate, respectively.</text>
</comment>
<comment type="catalytic activity">
    <reaction evidence="4">
        <text>(3S)-3,6-diaminohexanoate = (3S,5S)-3,5-diaminohexanoate</text>
        <dbReference type="Rhea" id="RHEA:21736"/>
        <dbReference type="ChEBI" id="CHEBI:57434"/>
        <dbReference type="ChEBI" id="CHEBI:57436"/>
        <dbReference type="EC" id="5.4.3.3"/>
    </reaction>
</comment>
<comment type="catalytic activity">
    <reaction evidence="1">
        <text>D-lysine = (2R,5S)-2,5-diaminohexanoate</text>
        <dbReference type="Rhea" id="RHEA:18241"/>
        <dbReference type="ChEBI" id="CHEBI:32557"/>
        <dbReference type="ChEBI" id="CHEBI:137487"/>
        <dbReference type="EC" id="5.4.3.3"/>
    </reaction>
</comment>
<comment type="cofactor">
    <cofactor evidence="1">
        <name>adenosylcob(III)alamin</name>
        <dbReference type="ChEBI" id="CHEBI:18408"/>
    </cofactor>
</comment>
<comment type="cofactor">
    <cofactor evidence="1">
        <name>pyridoxal 5'-phosphate</name>
        <dbReference type="ChEBI" id="CHEBI:597326"/>
    </cofactor>
</comment>
<comment type="pathway">
    <text evidence="4">Amino-acid degradation; L-lysine degradation via acetate pathway.</text>
</comment>
<comment type="subunit">
    <text evidence="1">Heterotetramer of 2 alpha and 2 beta subunits.</text>
</comment>
<comment type="similarity">
    <text evidence="2">Belongs to the KamD family.</text>
</comment>
<protein>
    <recommendedName>
        <fullName evidence="5">Lysine 5,6-aminomutase alpha subunit</fullName>
        <shortName evidence="5">5,6-LAM</shortName>
        <ecNumber evidence="1 4">5.4.3.3</ecNumber>
    </recommendedName>
    <alternativeName>
        <fullName evidence="1">D-lysine 5,6-aminomutase alpha subunit</fullName>
    </alternativeName>
    <alternativeName>
        <fullName evidence="6">L-beta-lysine 5,6-aminomutase alpha subunit</fullName>
    </alternativeName>
</protein>
<organism>
    <name type="scientific">Fusobacterium nucleatum subsp. nucleatum (strain ATCC 25586 / DSM 15643 / BCRC 10681 / CIP 101130 / JCM 8532 / KCTC 2640 / LMG 13131 / VPI 4355)</name>
    <dbReference type="NCBI Taxonomy" id="190304"/>
    <lineage>
        <taxon>Bacteria</taxon>
        <taxon>Fusobacteriati</taxon>
        <taxon>Fusobacteriota</taxon>
        <taxon>Fusobacteriia</taxon>
        <taxon>Fusobacteriales</taxon>
        <taxon>Fusobacteriaceae</taxon>
        <taxon>Fusobacterium</taxon>
    </lineage>
</organism>
<dbReference type="EC" id="5.4.3.3" evidence="1 4"/>
<dbReference type="EMBL" id="AE009951">
    <property type="protein sequence ID" value="AAL93962.1"/>
    <property type="molecule type" value="Genomic_DNA"/>
</dbReference>
<dbReference type="RefSeq" id="NP_602663.1">
    <property type="nucleotide sequence ID" value="NC_003454.1"/>
</dbReference>
<dbReference type="SMR" id="Q8RHX7"/>
<dbReference type="STRING" id="190304.FN1863"/>
<dbReference type="PaxDb" id="190304-FN1863"/>
<dbReference type="EnsemblBacteria" id="AAL93962">
    <property type="protein sequence ID" value="AAL93962"/>
    <property type="gene ID" value="FN1863"/>
</dbReference>
<dbReference type="KEGG" id="fnu:FN1863"/>
<dbReference type="PATRIC" id="fig|190304.8.peg.339"/>
<dbReference type="eggNOG" id="COG0274">
    <property type="taxonomic scope" value="Bacteria"/>
</dbReference>
<dbReference type="HOGENOM" id="CLU_517447_0_0_0"/>
<dbReference type="InParanoid" id="Q8RHX7"/>
<dbReference type="BioCyc" id="FNUC190304:G1FZS-360-MONOMER"/>
<dbReference type="BioCyc" id="MetaCyc:MONOMER-13527"/>
<dbReference type="BRENDA" id="5.4.3.3">
    <property type="organism ID" value="2370"/>
</dbReference>
<dbReference type="UniPathway" id="UPA00870"/>
<dbReference type="Proteomes" id="UP000002521">
    <property type="component" value="Chromosome"/>
</dbReference>
<dbReference type="GO" id="GO:0031419">
    <property type="term" value="F:cobalamin binding"/>
    <property type="evidence" value="ECO:0007669"/>
    <property type="project" value="UniProtKB-KW"/>
</dbReference>
<dbReference type="GO" id="GO:0047826">
    <property type="term" value="F:D-lysine 5,6-aminomutase activity"/>
    <property type="evidence" value="ECO:0007669"/>
    <property type="project" value="UniProtKB-EC"/>
</dbReference>
<dbReference type="GO" id="GO:0019475">
    <property type="term" value="P:L-lysine catabolic process to acetate"/>
    <property type="evidence" value="ECO:0007669"/>
    <property type="project" value="UniProtKB-UniPathway"/>
</dbReference>
<dbReference type="Gene3D" id="3.20.20.440">
    <property type="entry name" value="D-Lysine 5,6-aminomutase alpha subunit"/>
    <property type="match status" value="1"/>
</dbReference>
<dbReference type="InterPro" id="IPR016176">
    <property type="entry name" value="Cbl-dep_enz_cat"/>
</dbReference>
<dbReference type="InterPro" id="IPR015130">
    <property type="entry name" value="Lys-AminoMut_A"/>
</dbReference>
<dbReference type="InterPro" id="IPR037086">
    <property type="entry name" value="Lys-AminoMut_asu_sf"/>
</dbReference>
<dbReference type="Pfam" id="PF09043">
    <property type="entry name" value="Lys-AminoMut_A"/>
    <property type="match status" value="1"/>
</dbReference>
<dbReference type="SUPFAM" id="SSF51703">
    <property type="entry name" value="Cobalamin (vitamin B12)-dependent enzymes"/>
    <property type="match status" value="1"/>
</dbReference>
<keyword id="KW-0846">Cobalamin</keyword>
<keyword id="KW-0170">Cobalt</keyword>
<keyword id="KW-0413">Isomerase</keyword>
<keyword id="KW-0663">Pyridoxal phosphate</keyword>
<keyword id="KW-1185">Reference proteome</keyword>
<evidence type="ECO:0000250" key="1">
    <source>
        <dbReference type="UniProtKB" id="E3PRJ5"/>
    </source>
</evidence>
<evidence type="ECO:0000255" key="2"/>
<evidence type="ECO:0000269" key="3">
    <source>
    </source>
</evidence>
<evidence type="ECO:0000269" key="4">
    <source>
    </source>
</evidence>
<evidence type="ECO:0000305" key="5"/>
<evidence type="ECO:0000312" key="6">
    <source>
        <dbReference type="EMBL" id="AAL93962.1"/>
    </source>
</evidence>
<sequence>MGKLDLDWGLVKEARESAKKIAADAQVFIDAHSTVTVERTICRLLGIDGVDEFGVPLPNVIVDFIKDNGNISLGVAKYIGNAMIETKLQPQEIAEKVAKKELDITKMQWHDDFDIQLALKDITHSTVERIKANRKAREDYLEQFGGDKKGPYIYVIVATGNIYEDVTQAVAAARQGADVVAVIRTTGQSLLDFVPFGATTEGFGGTMATQENFRIMRKALDDVGVELGRYIRLCNYCSGLCMPEIAAMGALERLDMMLNDALYGILFRDINMKRTLVDQFFSRIINGFAGVIINTGEDNYLTTADAIEEAHTVLASQFINEQFALVAGLPEEQMGLGHAFEMEPGTENGFLLELAQAQMAREIFPKAPLKYMPPTKFMTGNIFKGHIQDALFNIVTITTGQKVHLLGMLTEAIHTPFMSDRALSIENARYIFNNLKDFGNDIEFKKGGIMNTRAQEVLKKAAELLKTIETMGIFKTIEKGVFGGVRRPIDGGKGLAGVFEKDNTYFNPFIPLMLGGDR</sequence>
<gene>
    <name type="ordered locus">FN1863</name>
</gene>
<proteinExistence type="evidence at protein level"/>
<reference key="1">
    <citation type="journal article" date="2002" name="J. Bacteriol.">
        <title>Genome sequence and analysis of the oral bacterium Fusobacterium nucleatum strain ATCC 25586.</title>
        <authorList>
            <person name="Kapatral V."/>
            <person name="Anderson I."/>
            <person name="Ivanova N."/>
            <person name="Reznik G."/>
            <person name="Los T."/>
            <person name="Lykidis A."/>
            <person name="Bhattacharyya A."/>
            <person name="Bartman A."/>
            <person name="Gardner W."/>
            <person name="Grechkin G."/>
            <person name="Zhu L."/>
            <person name="Vasieva O."/>
            <person name="Chu L."/>
            <person name="Kogan Y."/>
            <person name="Chaga O."/>
            <person name="Goltsman E."/>
            <person name="Bernal A."/>
            <person name="Larsen N."/>
            <person name="D'Souza M."/>
            <person name="Walunas T."/>
            <person name="Pusch G."/>
            <person name="Haselkorn R."/>
            <person name="Fonstein M."/>
            <person name="Kyrpides N.C."/>
            <person name="Overbeek R."/>
        </authorList>
    </citation>
    <scope>NUCLEOTIDE SEQUENCE [LARGE SCALE GENOMIC DNA]</scope>
    <source>
        <strain>ATCC 25586 / DSM 15643 / BCRC 10681 / CIP 101130 / JCM 8532 / KCTC 2640 / LMG 13131 / VPI 4355</strain>
    </source>
</reference>
<reference key="2">
    <citation type="journal article" date="1982" name="J. Bacteriol.">
        <title>Pathway of lysine degradation in Fusobacterium nucleatum.</title>
        <authorList>
            <person name="Barker H.A."/>
            <person name="Kahn J.M."/>
            <person name="Hedrick L."/>
        </authorList>
    </citation>
    <scope>FUNCTION</scope>
    <scope>CATALYTIC ACTIVITY</scope>
    <scope>PATHWAY</scope>
    <source>
        <strain evidence="4">ATCC 25586 / DSM 15643 / BCRC 10681 / CIP 101130 / JCM 8532 / KCTC 2640 / LMG 13131 / VPI 4355</strain>
    </source>
</reference>
<reference key="3">
    <citation type="journal article" date="2007" name="J. Biol. Chem.">
        <title>Identification of the last unknown genes in the fermentation pathway of lysine.</title>
        <authorList>
            <person name="Kreimeyer A."/>
            <person name="Perret A."/>
            <person name="Lechaplais C."/>
            <person name="Vallenet D."/>
            <person name="Medigue C."/>
            <person name="Salanoubat M."/>
            <person name="Weissenbach J."/>
        </authorList>
    </citation>
    <scope>IDENTIFICATION</scope>
    <source>
        <strain evidence="3">ATCC 25586 / DSM 15643 / BCRC 10681 / CIP 101130 / JCM 8532 / KCTC 2640 / LMG 13131 / VPI 4355</strain>
    </source>
</reference>
<name>KAMD_FUSNN</name>
<feature type="chain" id="PRO_0000416983" description="Lysine 5,6-aminomutase alpha subunit">
    <location>
        <begin position="1"/>
        <end position="518"/>
    </location>
</feature>
<feature type="binding site" evidence="1">
    <location>
        <begin position="184"/>
        <end position="189"/>
    </location>
    <ligand>
        <name>pyridoxal 5'-phosphate</name>
        <dbReference type="ChEBI" id="CHEBI:597326"/>
    </ligand>
</feature>
<feature type="binding site" evidence="1">
    <location>
        <position position="238"/>
    </location>
    <ligand>
        <name>pyridoxal 5'-phosphate</name>
        <dbReference type="ChEBI" id="CHEBI:597326"/>
    </ligand>
</feature>
<feature type="binding site" evidence="1">
    <location>
        <position position="263"/>
    </location>
    <ligand>
        <name>pyridoxal 5'-phosphate</name>
        <dbReference type="ChEBI" id="CHEBI:597326"/>
    </ligand>
</feature>
<feature type="binding site" evidence="1">
    <location>
        <position position="268"/>
    </location>
    <ligand>
        <name>pyridoxal 5'-phosphate</name>
        <dbReference type="ChEBI" id="CHEBI:597326"/>
    </ligand>
</feature>
<feature type="binding site" evidence="1">
    <location>
        <position position="299"/>
    </location>
    <ligand>
        <name>pyridoxal 5'-phosphate</name>
        <dbReference type="ChEBI" id="CHEBI:597326"/>
    </ligand>
</feature>